<keyword id="KW-0012">Acyltransferase</keyword>
<keyword id="KW-0333">Golgi apparatus</keyword>
<keyword id="KW-0449">Lipoprotein</keyword>
<keyword id="KW-0472">Membrane</keyword>
<keyword id="KW-0564">Palmitate</keyword>
<keyword id="KW-1185">Reference proteome</keyword>
<keyword id="KW-0808">Transferase</keyword>
<keyword id="KW-0812">Transmembrane</keyword>
<keyword id="KW-1133">Transmembrane helix</keyword>
<dbReference type="EC" id="2.3.1.225"/>
<dbReference type="EMBL" id="AC011436">
    <property type="protein sequence ID" value="AAF14029.1"/>
    <property type="status" value="ALT_SEQ"/>
    <property type="molecule type" value="Genomic_DNA"/>
</dbReference>
<dbReference type="EMBL" id="CP002686">
    <property type="protein sequence ID" value="AEE74750.1"/>
    <property type="molecule type" value="Genomic_DNA"/>
</dbReference>
<dbReference type="EMBL" id="AY039517">
    <property type="protein sequence ID" value="AAK62574.1"/>
    <property type="molecule type" value="mRNA"/>
</dbReference>
<dbReference type="EMBL" id="AY057741">
    <property type="protein sequence ID" value="AAL15371.1"/>
    <property type="molecule type" value="mRNA"/>
</dbReference>
<dbReference type="RefSeq" id="NP_566348.1">
    <property type="nucleotide sequence ID" value="NM_111766.3"/>
</dbReference>
<dbReference type="SMR" id="Q93VV0"/>
<dbReference type="BioGRID" id="5422">
    <property type="interactions" value="1"/>
</dbReference>
<dbReference type="FunCoup" id="Q93VV0">
    <property type="interactions" value="2015"/>
</dbReference>
<dbReference type="IntAct" id="Q93VV0">
    <property type="interactions" value="1"/>
</dbReference>
<dbReference type="STRING" id="3702.Q93VV0"/>
<dbReference type="GlyGen" id="Q93VV0">
    <property type="glycosylation" value="1 site"/>
</dbReference>
<dbReference type="PaxDb" id="3702-AT3G09320.1"/>
<dbReference type="ProteomicsDB" id="232321"/>
<dbReference type="EnsemblPlants" id="AT3G09320.1">
    <property type="protein sequence ID" value="AT3G09320.1"/>
    <property type="gene ID" value="AT3G09320"/>
</dbReference>
<dbReference type="GeneID" id="820088"/>
<dbReference type="Gramene" id="AT3G09320.1">
    <property type="protein sequence ID" value="AT3G09320.1"/>
    <property type="gene ID" value="AT3G09320"/>
</dbReference>
<dbReference type="KEGG" id="ath:AT3G09320"/>
<dbReference type="Araport" id="AT3G09320"/>
<dbReference type="TAIR" id="AT3G09320"/>
<dbReference type="eggNOG" id="KOG1315">
    <property type="taxonomic scope" value="Eukaryota"/>
</dbReference>
<dbReference type="HOGENOM" id="CLU_027721_7_0_1"/>
<dbReference type="InParanoid" id="Q93VV0"/>
<dbReference type="OMA" id="VAVQTFH"/>
<dbReference type="OrthoDB" id="331948at2759"/>
<dbReference type="PhylomeDB" id="Q93VV0"/>
<dbReference type="BRENDA" id="2.3.1.225">
    <property type="organism ID" value="399"/>
</dbReference>
<dbReference type="PRO" id="PR:Q93VV0"/>
<dbReference type="Proteomes" id="UP000006548">
    <property type="component" value="Chromosome 3"/>
</dbReference>
<dbReference type="ExpressionAtlas" id="Q93VV0">
    <property type="expression patterns" value="baseline and differential"/>
</dbReference>
<dbReference type="GO" id="GO:0000139">
    <property type="term" value="C:Golgi membrane"/>
    <property type="evidence" value="ECO:0007669"/>
    <property type="project" value="UniProtKB-SubCell"/>
</dbReference>
<dbReference type="GO" id="GO:0019706">
    <property type="term" value="F:protein-cysteine S-palmitoyltransferase activity"/>
    <property type="evidence" value="ECO:0007669"/>
    <property type="project" value="UniProtKB-EC"/>
</dbReference>
<dbReference type="InterPro" id="IPR001594">
    <property type="entry name" value="Palmitoyltrfase_DHHC"/>
</dbReference>
<dbReference type="InterPro" id="IPR039859">
    <property type="entry name" value="PFA4/ZDH16/20/ERF2-like"/>
</dbReference>
<dbReference type="PANTHER" id="PTHR12246">
    <property type="entry name" value="PALMITOYLTRANSFERASE ZDHHC16"/>
    <property type="match status" value="1"/>
</dbReference>
<dbReference type="Pfam" id="PF01529">
    <property type="entry name" value="DHHC"/>
    <property type="match status" value="1"/>
</dbReference>
<dbReference type="PROSITE" id="PS50216">
    <property type="entry name" value="DHHC"/>
    <property type="match status" value="1"/>
</dbReference>
<proteinExistence type="evidence at transcript level"/>
<comment type="function">
    <text evidence="1 4">Palmitoyl acyltransferase.</text>
</comment>
<comment type="catalytic activity">
    <reaction>
        <text>L-cysteinyl-[protein] + hexadecanoyl-CoA = S-hexadecanoyl-L-cysteinyl-[protein] + CoA</text>
        <dbReference type="Rhea" id="RHEA:36683"/>
        <dbReference type="Rhea" id="RHEA-COMP:10131"/>
        <dbReference type="Rhea" id="RHEA-COMP:11032"/>
        <dbReference type="ChEBI" id="CHEBI:29950"/>
        <dbReference type="ChEBI" id="CHEBI:57287"/>
        <dbReference type="ChEBI" id="CHEBI:57379"/>
        <dbReference type="ChEBI" id="CHEBI:74151"/>
        <dbReference type="EC" id="2.3.1.225"/>
    </reaction>
</comment>
<comment type="subcellular location">
    <subcellularLocation>
        <location evidence="5">Golgi apparatus membrane</location>
        <topology evidence="5">Multi-pass membrane protein</topology>
    </subcellularLocation>
</comment>
<comment type="domain">
    <text evidence="1">The DHHC domain is required for palmitoyltransferase activity.</text>
</comment>
<comment type="similarity">
    <text evidence="5">Belongs to the DHHC palmitoyltransferase family.</text>
</comment>
<comment type="sequence caution" evidence="5">
    <conflict type="erroneous gene model prediction">
        <sequence resource="EMBL-CDS" id="AAF14029"/>
    </conflict>
</comment>
<reference key="1">
    <citation type="journal article" date="2000" name="Nature">
        <title>Sequence and analysis of chromosome 3 of the plant Arabidopsis thaliana.</title>
        <authorList>
            <person name="Salanoubat M."/>
            <person name="Lemcke K."/>
            <person name="Rieger M."/>
            <person name="Ansorge W."/>
            <person name="Unseld M."/>
            <person name="Fartmann B."/>
            <person name="Valle G."/>
            <person name="Bloecker H."/>
            <person name="Perez-Alonso M."/>
            <person name="Obermaier B."/>
            <person name="Delseny M."/>
            <person name="Boutry M."/>
            <person name="Grivell L.A."/>
            <person name="Mache R."/>
            <person name="Puigdomenech P."/>
            <person name="De Simone V."/>
            <person name="Choisne N."/>
            <person name="Artiguenave F."/>
            <person name="Robert C."/>
            <person name="Brottier P."/>
            <person name="Wincker P."/>
            <person name="Cattolico L."/>
            <person name="Weissenbach J."/>
            <person name="Saurin W."/>
            <person name="Quetier F."/>
            <person name="Schaefer M."/>
            <person name="Mueller-Auer S."/>
            <person name="Gabel C."/>
            <person name="Fuchs M."/>
            <person name="Benes V."/>
            <person name="Wurmbach E."/>
            <person name="Drzonek H."/>
            <person name="Erfle H."/>
            <person name="Jordan N."/>
            <person name="Bangert S."/>
            <person name="Wiedelmann R."/>
            <person name="Kranz H."/>
            <person name="Voss H."/>
            <person name="Holland R."/>
            <person name="Brandt P."/>
            <person name="Nyakatura G."/>
            <person name="Vezzi A."/>
            <person name="D'Angelo M."/>
            <person name="Pallavicini A."/>
            <person name="Toppo S."/>
            <person name="Simionati B."/>
            <person name="Conrad A."/>
            <person name="Hornischer K."/>
            <person name="Kauer G."/>
            <person name="Loehnert T.-H."/>
            <person name="Nordsiek G."/>
            <person name="Reichelt J."/>
            <person name="Scharfe M."/>
            <person name="Schoen O."/>
            <person name="Bargues M."/>
            <person name="Terol J."/>
            <person name="Climent J."/>
            <person name="Navarro P."/>
            <person name="Collado C."/>
            <person name="Perez-Perez A."/>
            <person name="Ottenwaelder B."/>
            <person name="Duchemin D."/>
            <person name="Cooke R."/>
            <person name="Laudie M."/>
            <person name="Berger-Llauro C."/>
            <person name="Purnelle B."/>
            <person name="Masuy D."/>
            <person name="de Haan M."/>
            <person name="Maarse A.C."/>
            <person name="Alcaraz J.-P."/>
            <person name="Cottet A."/>
            <person name="Casacuberta E."/>
            <person name="Monfort A."/>
            <person name="Argiriou A."/>
            <person name="Flores M."/>
            <person name="Liguori R."/>
            <person name="Vitale D."/>
            <person name="Mannhaupt G."/>
            <person name="Haase D."/>
            <person name="Schoof H."/>
            <person name="Rudd S."/>
            <person name="Zaccaria P."/>
            <person name="Mewes H.-W."/>
            <person name="Mayer K.F.X."/>
            <person name="Kaul S."/>
            <person name="Town C.D."/>
            <person name="Koo H.L."/>
            <person name="Tallon L.J."/>
            <person name="Jenkins J."/>
            <person name="Rooney T."/>
            <person name="Rizzo M."/>
            <person name="Walts A."/>
            <person name="Utterback T."/>
            <person name="Fujii C.Y."/>
            <person name="Shea T.P."/>
            <person name="Creasy T.H."/>
            <person name="Haas B."/>
            <person name="Maiti R."/>
            <person name="Wu D."/>
            <person name="Peterson J."/>
            <person name="Van Aken S."/>
            <person name="Pai G."/>
            <person name="Militscher J."/>
            <person name="Sellers P."/>
            <person name="Gill J.E."/>
            <person name="Feldblyum T.V."/>
            <person name="Preuss D."/>
            <person name="Lin X."/>
            <person name="Nierman W.C."/>
            <person name="Salzberg S.L."/>
            <person name="White O."/>
            <person name="Venter J.C."/>
            <person name="Fraser C.M."/>
            <person name="Kaneko T."/>
            <person name="Nakamura Y."/>
            <person name="Sato S."/>
            <person name="Kato T."/>
            <person name="Asamizu E."/>
            <person name="Sasamoto S."/>
            <person name="Kimura T."/>
            <person name="Idesawa K."/>
            <person name="Kawashima K."/>
            <person name="Kishida Y."/>
            <person name="Kiyokawa C."/>
            <person name="Kohara M."/>
            <person name="Matsumoto M."/>
            <person name="Matsuno A."/>
            <person name="Muraki A."/>
            <person name="Nakayama S."/>
            <person name="Nakazaki N."/>
            <person name="Shinpo S."/>
            <person name="Takeuchi C."/>
            <person name="Wada T."/>
            <person name="Watanabe A."/>
            <person name="Yamada M."/>
            <person name="Yasuda M."/>
            <person name="Tabata S."/>
        </authorList>
    </citation>
    <scope>NUCLEOTIDE SEQUENCE [LARGE SCALE GENOMIC DNA]</scope>
    <source>
        <strain>cv. Columbia</strain>
    </source>
</reference>
<reference key="2">
    <citation type="journal article" date="2017" name="Plant J.">
        <title>Araport11: a complete reannotation of the Arabidopsis thaliana reference genome.</title>
        <authorList>
            <person name="Cheng C.Y."/>
            <person name="Krishnakumar V."/>
            <person name="Chan A.P."/>
            <person name="Thibaud-Nissen F."/>
            <person name="Schobel S."/>
            <person name="Town C.D."/>
        </authorList>
    </citation>
    <scope>GENOME REANNOTATION</scope>
    <source>
        <strain>cv. Columbia</strain>
    </source>
</reference>
<reference key="3">
    <citation type="journal article" date="2003" name="Science">
        <title>Empirical analysis of transcriptional activity in the Arabidopsis genome.</title>
        <authorList>
            <person name="Yamada K."/>
            <person name="Lim J."/>
            <person name="Dale J.M."/>
            <person name="Chen H."/>
            <person name="Shinn P."/>
            <person name="Palm C.J."/>
            <person name="Southwick A.M."/>
            <person name="Wu H.C."/>
            <person name="Kim C.J."/>
            <person name="Nguyen M."/>
            <person name="Pham P.K."/>
            <person name="Cheuk R.F."/>
            <person name="Karlin-Newmann G."/>
            <person name="Liu S.X."/>
            <person name="Lam B."/>
            <person name="Sakano H."/>
            <person name="Wu T."/>
            <person name="Yu G."/>
            <person name="Miranda M."/>
            <person name="Quach H.L."/>
            <person name="Tripp M."/>
            <person name="Chang C.H."/>
            <person name="Lee J.M."/>
            <person name="Toriumi M.J."/>
            <person name="Chan M.M."/>
            <person name="Tang C.C."/>
            <person name="Onodera C.S."/>
            <person name="Deng J.M."/>
            <person name="Akiyama K."/>
            <person name="Ansari Y."/>
            <person name="Arakawa T."/>
            <person name="Banh J."/>
            <person name="Banno F."/>
            <person name="Bowser L."/>
            <person name="Brooks S.Y."/>
            <person name="Carninci P."/>
            <person name="Chao Q."/>
            <person name="Choy N."/>
            <person name="Enju A."/>
            <person name="Goldsmith A.D."/>
            <person name="Gurjal M."/>
            <person name="Hansen N.F."/>
            <person name="Hayashizaki Y."/>
            <person name="Johnson-Hopson C."/>
            <person name="Hsuan V.W."/>
            <person name="Iida K."/>
            <person name="Karnes M."/>
            <person name="Khan S."/>
            <person name="Koesema E."/>
            <person name="Ishida J."/>
            <person name="Jiang P.X."/>
            <person name="Jones T."/>
            <person name="Kawai J."/>
            <person name="Kamiya A."/>
            <person name="Meyers C."/>
            <person name="Nakajima M."/>
            <person name="Narusaka M."/>
            <person name="Seki M."/>
            <person name="Sakurai T."/>
            <person name="Satou M."/>
            <person name="Tamse R."/>
            <person name="Vaysberg M."/>
            <person name="Wallender E.K."/>
            <person name="Wong C."/>
            <person name="Yamamura Y."/>
            <person name="Yuan S."/>
            <person name="Shinozaki K."/>
            <person name="Davis R.W."/>
            <person name="Theologis A."/>
            <person name="Ecker J.R."/>
        </authorList>
    </citation>
    <scope>NUCLEOTIDE SEQUENCE [LARGE SCALE MRNA]</scope>
    <source>
        <strain>cv. Columbia</strain>
    </source>
</reference>
<reference key="4">
    <citation type="book" date="2007" name="Proceedings of the 18th international conference on Arabidopsis research">
        <title>S-acylation: dynamic control of plant development and sigalling by lipid modification of proteins.</title>
        <authorList>
            <person name="Hemsley P.A."/>
            <person name="Taylor L."/>
            <person name="Grierson C.S."/>
        </authorList>
    </citation>
    <scope>GENE FAMILY</scope>
    <scope>FUNCTION</scope>
</reference>
<reference key="5">
    <citation type="journal article" date="2012" name="Plant Physiol.">
        <title>Genomics and localization of the Arabidopsis DHHC-cysteine-rich domain S-acyltransferase protein family.</title>
        <authorList>
            <person name="Batistic O."/>
        </authorList>
    </citation>
    <scope>SUBCELLULAR LOCATION</scope>
    <scope>GENE FAMILY</scope>
    <scope>NOMENCLATURE</scope>
</reference>
<gene>
    <name type="primary">PAT16</name>
    <name type="ordered locus">At3g09320</name>
    <name type="ORF">F3L24.19</name>
</gene>
<organism>
    <name type="scientific">Arabidopsis thaliana</name>
    <name type="common">Mouse-ear cress</name>
    <dbReference type="NCBI Taxonomy" id="3702"/>
    <lineage>
        <taxon>Eukaryota</taxon>
        <taxon>Viridiplantae</taxon>
        <taxon>Streptophyta</taxon>
        <taxon>Embryophyta</taxon>
        <taxon>Tracheophyta</taxon>
        <taxon>Spermatophyta</taxon>
        <taxon>Magnoliopsida</taxon>
        <taxon>eudicotyledons</taxon>
        <taxon>Gunneridae</taxon>
        <taxon>Pentapetalae</taxon>
        <taxon>rosids</taxon>
        <taxon>malvids</taxon>
        <taxon>Brassicales</taxon>
        <taxon>Brassicaceae</taxon>
        <taxon>Camelineae</taxon>
        <taxon>Arabidopsis</taxon>
    </lineage>
</organism>
<evidence type="ECO:0000250" key="1"/>
<evidence type="ECO:0000255" key="2"/>
<evidence type="ECO:0000255" key="3">
    <source>
        <dbReference type="PROSITE-ProRule" id="PRU00067"/>
    </source>
</evidence>
<evidence type="ECO:0000269" key="4">
    <source ref="4"/>
</evidence>
<evidence type="ECO:0000305" key="5"/>
<accession>Q93VV0</accession>
<accession>Q9SR31</accession>
<sequence length="286" mass="32377">MKRKGVGFSLPVTVVMLVIGFIYFASVFTFIDRWFSLTSSPGIANAAAFTALALMCIYNYSIAVFRDPGRVPLNYMPDVEDPESPVHEIKRKGGDLRYCQKCSHFKPPRAHHCRVCKRCVLRMDHHCIWINNCVGHTNYKVFFVFVVYAVTACVYSLVLLVGSLTVEPQDEEEEMGSYLRTIYVISAFLLIPLSIALGVLLGWHIYLILQNKTTIEYHEGVRAMWLAEKGGQVYKHPYDIGAYENLTLILGPNILSWLCPTSRHIGSGVRFRTAFDSIPDSSETKH</sequence>
<protein>
    <recommendedName>
        <fullName>Probable protein S-acyltransferase 16</fullName>
        <ecNumber>2.3.1.225</ecNumber>
    </recommendedName>
    <alternativeName>
        <fullName>Probable palmitoyltransferase At3g09320</fullName>
    </alternativeName>
    <alternativeName>
        <fullName>Zinc finger DHHC domain-containing protein At3g09320</fullName>
    </alternativeName>
</protein>
<name>ZDHC6_ARATH</name>
<feature type="chain" id="PRO_0000363594" description="Probable protein S-acyltransferase 16">
    <location>
        <begin position="1"/>
        <end position="286"/>
    </location>
</feature>
<feature type="transmembrane region" description="Helical" evidence="2">
    <location>
        <begin position="11"/>
        <end position="31"/>
    </location>
</feature>
<feature type="transmembrane region" description="Helical" evidence="2">
    <location>
        <begin position="45"/>
        <end position="65"/>
    </location>
</feature>
<feature type="transmembrane region" description="Helical" evidence="2">
    <location>
        <begin position="141"/>
        <end position="161"/>
    </location>
</feature>
<feature type="transmembrane region" description="Helical" evidence="2">
    <location>
        <begin position="182"/>
        <end position="202"/>
    </location>
</feature>
<feature type="domain" description="DHHC" evidence="3">
    <location>
        <begin position="97"/>
        <end position="147"/>
    </location>
</feature>
<feature type="active site" description="S-palmitoyl cysteine intermediate" evidence="1">
    <location>
        <position position="127"/>
    </location>
</feature>